<keyword id="KW-0378">Hydrolase</keyword>
<keyword id="KW-0460">Magnesium</keyword>
<name>DGTP_SALEP</name>
<protein>
    <recommendedName>
        <fullName evidence="1">Deoxyguanosinetriphosphate triphosphohydrolase</fullName>
        <shortName evidence="1">dGTP triphosphohydrolase</shortName>
        <shortName evidence="1">dGTPase</shortName>
        <ecNumber evidence="1">3.1.5.1</ecNumber>
    </recommendedName>
</protein>
<proteinExistence type="inferred from homology"/>
<dbReference type="EC" id="3.1.5.1" evidence="1"/>
<dbReference type="EMBL" id="AM933172">
    <property type="protein sequence ID" value="CAR31801.1"/>
    <property type="molecule type" value="Genomic_DNA"/>
</dbReference>
<dbReference type="RefSeq" id="WP_000146451.1">
    <property type="nucleotide sequence ID" value="NC_011294.1"/>
</dbReference>
<dbReference type="SMR" id="B5R3H2"/>
<dbReference type="KEGG" id="set:SEN0213"/>
<dbReference type="HOGENOM" id="CLU_028163_2_1_6"/>
<dbReference type="Proteomes" id="UP000000613">
    <property type="component" value="Chromosome"/>
</dbReference>
<dbReference type="GO" id="GO:0008832">
    <property type="term" value="F:dGTPase activity"/>
    <property type="evidence" value="ECO:0007669"/>
    <property type="project" value="UniProtKB-UniRule"/>
</dbReference>
<dbReference type="GO" id="GO:0000287">
    <property type="term" value="F:magnesium ion binding"/>
    <property type="evidence" value="ECO:0007669"/>
    <property type="project" value="UniProtKB-UniRule"/>
</dbReference>
<dbReference type="GO" id="GO:0006203">
    <property type="term" value="P:dGTP catabolic process"/>
    <property type="evidence" value="ECO:0007669"/>
    <property type="project" value="InterPro"/>
</dbReference>
<dbReference type="CDD" id="cd00077">
    <property type="entry name" value="HDc"/>
    <property type="match status" value="1"/>
</dbReference>
<dbReference type="FunFam" id="1.10.3210.10:FF:000009">
    <property type="entry name" value="Deoxyguanosinetriphosphate triphosphohydrolase"/>
    <property type="match status" value="1"/>
</dbReference>
<dbReference type="FunFam" id="1.10.3210.10:FF:000010">
    <property type="entry name" value="Deoxyguanosinetriphosphate triphosphohydrolase"/>
    <property type="match status" value="1"/>
</dbReference>
<dbReference type="FunFam" id="1.10.3410.10:FF:000001">
    <property type="entry name" value="Deoxyguanosinetriphosphate triphosphohydrolase"/>
    <property type="match status" value="1"/>
</dbReference>
<dbReference type="Gene3D" id="1.10.3210.10">
    <property type="entry name" value="Hypothetical protein af1432"/>
    <property type="match status" value="3"/>
</dbReference>
<dbReference type="Gene3D" id="1.10.3410.10">
    <property type="entry name" value="putative deoxyguanosinetriphosphate triphosphohydrolase like domain"/>
    <property type="match status" value="1"/>
</dbReference>
<dbReference type="HAMAP" id="MF_00030">
    <property type="entry name" value="dGTPase_type1"/>
    <property type="match status" value="1"/>
</dbReference>
<dbReference type="InterPro" id="IPR023293">
    <property type="entry name" value="dGTP_triP_hydro_central_sf"/>
</dbReference>
<dbReference type="InterPro" id="IPR006261">
    <property type="entry name" value="dGTPase"/>
</dbReference>
<dbReference type="InterPro" id="IPR050135">
    <property type="entry name" value="dGTPase-like"/>
</dbReference>
<dbReference type="InterPro" id="IPR020779">
    <property type="entry name" value="dNTPase_1"/>
</dbReference>
<dbReference type="InterPro" id="IPR003607">
    <property type="entry name" value="HD/PDEase_dom"/>
</dbReference>
<dbReference type="InterPro" id="IPR006674">
    <property type="entry name" value="HD_domain"/>
</dbReference>
<dbReference type="NCBIfam" id="TIGR01353">
    <property type="entry name" value="dGTP_triPase"/>
    <property type="match status" value="1"/>
</dbReference>
<dbReference type="NCBIfam" id="NF003429">
    <property type="entry name" value="PRK04926.1"/>
    <property type="match status" value="1"/>
</dbReference>
<dbReference type="PANTHER" id="PTHR11373:SF32">
    <property type="entry name" value="DEOXYGUANOSINETRIPHOSPHATE TRIPHOSPHOHYDROLASE"/>
    <property type="match status" value="1"/>
</dbReference>
<dbReference type="PANTHER" id="PTHR11373">
    <property type="entry name" value="DEOXYNUCLEOSIDE TRIPHOSPHATE TRIPHOSPHOHYDROLASE"/>
    <property type="match status" value="1"/>
</dbReference>
<dbReference type="Pfam" id="PF01966">
    <property type="entry name" value="HD"/>
    <property type="match status" value="1"/>
</dbReference>
<dbReference type="SMART" id="SM00471">
    <property type="entry name" value="HDc"/>
    <property type="match status" value="1"/>
</dbReference>
<dbReference type="SUPFAM" id="SSF109604">
    <property type="entry name" value="HD-domain/PDEase-like"/>
    <property type="match status" value="1"/>
</dbReference>
<dbReference type="PROSITE" id="PS51831">
    <property type="entry name" value="HD"/>
    <property type="match status" value="1"/>
</dbReference>
<sequence length="505" mass="59417">MASIDFRNKINWHRRYRSPQGVKTEHEILRIFESDRGRIINSPAIRRLQQKTQVFPLERNAAVRTRLTHSMEVQQVGRYIAKEILSRLKEQNRLEEYGLDALTGPFESIVEMACLMHDIGNPPFGHFGEAAINDWFRQRLHPEDAESQPLTHDRCVVSSLRLQEGEENLNDIRRKVRQDICHFEGNAQGIRLVHTLMRMNLTWAQVGGILKYTRPAWWRGPVPDSHRYLMKKPGYYLSEEKYIARLRKELQLAPYSRFPLTWIMEAADDISYCVADLEDAVEKRIFSVEQLYHHLYHAWGHHEKDSLFELVVGNAWEKSRANTLSRSTEDQFFMYLRVNTLNKLVPYAAQRFIDNLPQIFAGTFNQALLEDASGFSRLLGLYKNVAVEHVFSHPDVEQLELQGYRVISGLLDIYQPLLSLSLNDFRELVEKERLKRFPIESRLFQKLSTRHRLAYVEVVSKLPTDSAEYPVLEYYYRCRLIQDYISGMTDLYAWDEYRRLMAVEQ</sequence>
<accession>B5R3H2</accession>
<gene>
    <name evidence="1" type="primary">dgt</name>
    <name type="ordered locus">SEN0213</name>
</gene>
<organism>
    <name type="scientific">Salmonella enteritidis PT4 (strain P125109)</name>
    <dbReference type="NCBI Taxonomy" id="550537"/>
    <lineage>
        <taxon>Bacteria</taxon>
        <taxon>Pseudomonadati</taxon>
        <taxon>Pseudomonadota</taxon>
        <taxon>Gammaproteobacteria</taxon>
        <taxon>Enterobacterales</taxon>
        <taxon>Enterobacteriaceae</taxon>
        <taxon>Salmonella</taxon>
    </lineage>
</organism>
<feature type="chain" id="PRO_1000090262" description="Deoxyguanosinetriphosphate triphosphohydrolase">
    <location>
        <begin position="1"/>
        <end position="505"/>
    </location>
</feature>
<feature type="domain" description="HD" evidence="2">
    <location>
        <begin position="66"/>
        <end position="273"/>
    </location>
</feature>
<comment type="function">
    <text evidence="1">dGTPase preferentially hydrolyzes dGTP over the other canonical NTPs.</text>
</comment>
<comment type="catalytic activity">
    <reaction evidence="1">
        <text>dGTP + H2O = 2'-deoxyguanosine + triphosphate + H(+)</text>
        <dbReference type="Rhea" id="RHEA:15193"/>
        <dbReference type="ChEBI" id="CHEBI:15377"/>
        <dbReference type="ChEBI" id="CHEBI:15378"/>
        <dbReference type="ChEBI" id="CHEBI:17172"/>
        <dbReference type="ChEBI" id="CHEBI:18036"/>
        <dbReference type="ChEBI" id="CHEBI:61429"/>
        <dbReference type="EC" id="3.1.5.1"/>
    </reaction>
</comment>
<comment type="cofactor">
    <cofactor evidence="1">
        <name>Mg(2+)</name>
        <dbReference type="ChEBI" id="CHEBI:18420"/>
    </cofactor>
</comment>
<comment type="subunit">
    <text evidence="1">Homotetramer.</text>
</comment>
<comment type="similarity">
    <text evidence="1">Belongs to the dGTPase family. Type 1 subfamily.</text>
</comment>
<reference key="1">
    <citation type="journal article" date="2008" name="Genome Res.">
        <title>Comparative genome analysis of Salmonella enteritidis PT4 and Salmonella gallinarum 287/91 provides insights into evolutionary and host adaptation pathways.</title>
        <authorList>
            <person name="Thomson N.R."/>
            <person name="Clayton D.J."/>
            <person name="Windhorst D."/>
            <person name="Vernikos G."/>
            <person name="Davidson S."/>
            <person name="Churcher C."/>
            <person name="Quail M.A."/>
            <person name="Stevens M."/>
            <person name="Jones M.A."/>
            <person name="Watson M."/>
            <person name="Barron A."/>
            <person name="Layton A."/>
            <person name="Pickard D."/>
            <person name="Kingsley R.A."/>
            <person name="Bignell A."/>
            <person name="Clark L."/>
            <person name="Harris B."/>
            <person name="Ormond D."/>
            <person name="Abdellah Z."/>
            <person name="Brooks K."/>
            <person name="Cherevach I."/>
            <person name="Chillingworth T."/>
            <person name="Woodward J."/>
            <person name="Norberczak H."/>
            <person name="Lord A."/>
            <person name="Arrowsmith C."/>
            <person name="Jagels K."/>
            <person name="Moule S."/>
            <person name="Mungall K."/>
            <person name="Saunders M."/>
            <person name="Whitehead S."/>
            <person name="Chabalgoity J.A."/>
            <person name="Maskell D."/>
            <person name="Humphreys T."/>
            <person name="Roberts M."/>
            <person name="Barrow P.A."/>
            <person name="Dougan G."/>
            <person name="Parkhill J."/>
        </authorList>
    </citation>
    <scope>NUCLEOTIDE SEQUENCE [LARGE SCALE GENOMIC DNA]</scope>
    <source>
        <strain>P125109</strain>
    </source>
</reference>
<evidence type="ECO:0000255" key="1">
    <source>
        <dbReference type="HAMAP-Rule" id="MF_00030"/>
    </source>
</evidence>
<evidence type="ECO:0000255" key="2">
    <source>
        <dbReference type="PROSITE-ProRule" id="PRU01175"/>
    </source>
</evidence>